<sequence>MEDERIKLLFKEKALEILMTIYYESLGGNDVYIQYIASKVNSPHSYVWLIIKKFEEAKMVECELEGRTKIIRLTDKGQKIAQQIKSIIDIMENDT</sequence>
<feature type="chain" id="PRO_0000127993" description="Uncharacterized protein AF_1382">
    <location>
        <begin position="1"/>
        <end position="95"/>
    </location>
</feature>
<feature type="helix" evidence="1">
    <location>
        <begin position="6"/>
        <end position="9"/>
    </location>
</feature>
<feature type="helix" evidence="1">
    <location>
        <begin position="12"/>
        <end position="26"/>
    </location>
</feature>
<feature type="helix" evidence="1">
    <location>
        <begin position="33"/>
        <end position="39"/>
    </location>
</feature>
<feature type="strand" evidence="1">
    <location>
        <begin position="40"/>
        <end position="42"/>
    </location>
</feature>
<feature type="helix" evidence="1">
    <location>
        <begin position="44"/>
        <end position="56"/>
    </location>
</feature>
<feature type="strand" evidence="1">
    <location>
        <begin position="59"/>
        <end position="65"/>
    </location>
</feature>
<feature type="strand" evidence="1">
    <location>
        <begin position="68"/>
        <end position="73"/>
    </location>
</feature>
<feature type="helix" evidence="1">
    <location>
        <begin position="75"/>
        <end position="90"/>
    </location>
</feature>
<protein>
    <recommendedName>
        <fullName>Uncharacterized protein AF_1382</fullName>
    </recommendedName>
</protein>
<dbReference type="EMBL" id="AE000782">
    <property type="protein sequence ID" value="AAB89883.1"/>
    <property type="molecule type" value="Genomic_DNA"/>
</dbReference>
<dbReference type="PIR" id="E69422">
    <property type="entry name" value="E69422"/>
</dbReference>
<dbReference type="PDB" id="2QVO">
    <property type="method" value="X-ray"/>
    <property type="resolution" value="1.85 A"/>
    <property type="chains" value="A=1-95"/>
</dbReference>
<dbReference type="PDB" id="3O3K">
    <property type="method" value="X-ray"/>
    <property type="resolution" value="2.30 A"/>
    <property type="chains" value="A=1-95"/>
</dbReference>
<dbReference type="PDB" id="3OV8">
    <property type="method" value="X-ray"/>
    <property type="resolution" value="1.85 A"/>
    <property type="chains" value="A=1-95"/>
</dbReference>
<dbReference type="PDBsum" id="2QVO"/>
<dbReference type="PDBsum" id="3O3K"/>
<dbReference type="PDBsum" id="3OV8"/>
<dbReference type="SMR" id="O28889"/>
<dbReference type="STRING" id="224325.AF_1382"/>
<dbReference type="PaxDb" id="224325-AF_1382"/>
<dbReference type="DNASU" id="1484606"/>
<dbReference type="EnsemblBacteria" id="AAB89883">
    <property type="protein sequence ID" value="AAB89883"/>
    <property type="gene ID" value="AF_1382"/>
</dbReference>
<dbReference type="KEGG" id="afu:AF_1382"/>
<dbReference type="eggNOG" id="arCOG01059">
    <property type="taxonomic scope" value="Archaea"/>
</dbReference>
<dbReference type="HOGENOM" id="CLU_2353106_0_0_2"/>
<dbReference type="OrthoDB" id="51423at2157"/>
<dbReference type="EvolutionaryTrace" id="O28889"/>
<dbReference type="Proteomes" id="UP000002199">
    <property type="component" value="Chromosome"/>
</dbReference>
<dbReference type="Gene3D" id="1.10.10.10">
    <property type="entry name" value="Winged helix-like DNA-binding domain superfamily/Winged helix DNA-binding domain"/>
    <property type="match status" value="1"/>
</dbReference>
<dbReference type="InterPro" id="IPR036388">
    <property type="entry name" value="WH-like_DNA-bd_sf"/>
</dbReference>
<dbReference type="InterPro" id="IPR036390">
    <property type="entry name" value="WH_DNA-bd_sf"/>
</dbReference>
<dbReference type="SUPFAM" id="SSF46785">
    <property type="entry name" value="Winged helix' DNA-binding domain"/>
    <property type="match status" value="1"/>
</dbReference>
<name>Y1382_ARCFU</name>
<reference key="1">
    <citation type="journal article" date="1997" name="Nature">
        <title>The complete genome sequence of the hyperthermophilic, sulphate-reducing archaeon Archaeoglobus fulgidus.</title>
        <authorList>
            <person name="Klenk H.-P."/>
            <person name="Clayton R.A."/>
            <person name="Tomb J.-F."/>
            <person name="White O."/>
            <person name="Nelson K.E."/>
            <person name="Ketchum K.A."/>
            <person name="Dodson R.J."/>
            <person name="Gwinn M.L."/>
            <person name="Hickey E.K."/>
            <person name="Peterson J.D."/>
            <person name="Richardson D.L."/>
            <person name="Kerlavage A.R."/>
            <person name="Graham D.E."/>
            <person name="Kyrpides N.C."/>
            <person name="Fleischmann R.D."/>
            <person name="Quackenbush J."/>
            <person name="Lee N.H."/>
            <person name="Sutton G.G."/>
            <person name="Gill S.R."/>
            <person name="Kirkness E.F."/>
            <person name="Dougherty B.A."/>
            <person name="McKenney K."/>
            <person name="Adams M.D."/>
            <person name="Loftus B.J."/>
            <person name="Peterson S.N."/>
            <person name="Reich C.I."/>
            <person name="McNeil L.K."/>
            <person name="Badger J.H."/>
            <person name="Glodek A."/>
            <person name="Zhou L."/>
            <person name="Overbeek R."/>
            <person name="Gocayne J.D."/>
            <person name="Weidman J.F."/>
            <person name="McDonald L.A."/>
            <person name="Utterback T.R."/>
            <person name="Cotton M.D."/>
            <person name="Spriggs T."/>
            <person name="Artiach P."/>
            <person name="Kaine B.P."/>
            <person name="Sykes S.M."/>
            <person name="Sadow P.W."/>
            <person name="D'Andrea K.P."/>
            <person name="Bowman C."/>
            <person name="Fujii C."/>
            <person name="Garland S.A."/>
            <person name="Mason T.M."/>
            <person name="Olsen G.J."/>
            <person name="Fraser C.M."/>
            <person name="Smith H.O."/>
            <person name="Woese C.R."/>
            <person name="Venter J.C."/>
        </authorList>
    </citation>
    <scope>NUCLEOTIDE SEQUENCE [LARGE SCALE GENOMIC DNA]</scope>
    <source>
        <strain>ATCC 49558 / DSM 4304 / JCM 9628 / NBRC 100126 / VC-16</strain>
    </source>
</reference>
<organism>
    <name type="scientific">Archaeoglobus fulgidus (strain ATCC 49558 / DSM 4304 / JCM 9628 / NBRC 100126 / VC-16)</name>
    <dbReference type="NCBI Taxonomy" id="224325"/>
    <lineage>
        <taxon>Archaea</taxon>
        <taxon>Methanobacteriati</taxon>
        <taxon>Methanobacteriota</taxon>
        <taxon>Archaeoglobi</taxon>
        <taxon>Archaeoglobales</taxon>
        <taxon>Archaeoglobaceae</taxon>
        <taxon>Archaeoglobus</taxon>
    </lineage>
</organism>
<proteinExistence type="evidence at protein level"/>
<gene>
    <name type="ordered locus">AF_1382</name>
</gene>
<keyword id="KW-0002">3D-structure</keyword>
<keyword id="KW-1185">Reference proteome</keyword>
<accession>O28889</accession>
<evidence type="ECO:0007829" key="1">
    <source>
        <dbReference type="PDB" id="2QVO"/>
    </source>
</evidence>